<feature type="chain" id="PRO_0000110611" description="Glutaminase 1">
    <location>
        <begin position="1"/>
        <end position="310"/>
    </location>
</feature>
<feature type="binding site" evidence="1">
    <location>
        <position position="66"/>
    </location>
    <ligand>
        <name>substrate</name>
    </ligand>
</feature>
<feature type="binding site" evidence="1">
    <location>
        <position position="117"/>
    </location>
    <ligand>
        <name>substrate</name>
    </ligand>
</feature>
<feature type="binding site" evidence="1">
    <location>
        <position position="161"/>
    </location>
    <ligand>
        <name>substrate</name>
    </ligand>
</feature>
<feature type="binding site" evidence="1">
    <location>
        <position position="168"/>
    </location>
    <ligand>
        <name>substrate</name>
    </ligand>
</feature>
<feature type="binding site" evidence="1">
    <location>
        <position position="192"/>
    </location>
    <ligand>
        <name>substrate</name>
    </ligand>
</feature>
<feature type="binding site" evidence="1">
    <location>
        <position position="244"/>
    </location>
    <ligand>
        <name>substrate</name>
    </ligand>
</feature>
<feature type="binding site" evidence="1">
    <location>
        <position position="262"/>
    </location>
    <ligand>
        <name>substrate</name>
    </ligand>
</feature>
<feature type="modified residue" description="N6-acetyllysine" evidence="1">
    <location>
        <position position="294"/>
    </location>
</feature>
<evidence type="ECO:0000255" key="1">
    <source>
        <dbReference type="HAMAP-Rule" id="MF_00313"/>
    </source>
</evidence>
<organism>
    <name type="scientific">Escherichia coli O6:H1 (strain CFT073 / ATCC 700928 / UPEC)</name>
    <dbReference type="NCBI Taxonomy" id="199310"/>
    <lineage>
        <taxon>Bacteria</taxon>
        <taxon>Pseudomonadati</taxon>
        <taxon>Pseudomonadota</taxon>
        <taxon>Gammaproteobacteria</taxon>
        <taxon>Enterobacterales</taxon>
        <taxon>Enterobacteriaceae</taxon>
        <taxon>Escherichia</taxon>
    </lineage>
</organism>
<dbReference type="EC" id="3.5.1.2" evidence="1"/>
<dbReference type="EMBL" id="AE014075">
    <property type="protein sequence ID" value="AAN79083.1"/>
    <property type="molecule type" value="Genomic_DNA"/>
</dbReference>
<dbReference type="SMR" id="Q8FK76"/>
<dbReference type="STRING" id="199310.c0605"/>
<dbReference type="KEGG" id="ecc:c0605"/>
<dbReference type="eggNOG" id="COG2066">
    <property type="taxonomic scope" value="Bacteria"/>
</dbReference>
<dbReference type="HOGENOM" id="CLU_027932_1_0_6"/>
<dbReference type="BioCyc" id="ECOL199310:C0605-MONOMER"/>
<dbReference type="Proteomes" id="UP000001410">
    <property type="component" value="Chromosome"/>
</dbReference>
<dbReference type="GO" id="GO:0004359">
    <property type="term" value="F:glutaminase activity"/>
    <property type="evidence" value="ECO:0007669"/>
    <property type="project" value="UniProtKB-UniRule"/>
</dbReference>
<dbReference type="GO" id="GO:0006537">
    <property type="term" value="P:glutamate biosynthetic process"/>
    <property type="evidence" value="ECO:0007669"/>
    <property type="project" value="TreeGrafter"/>
</dbReference>
<dbReference type="GO" id="GO:0006543">
    <property type="term" value="P:glutamine catabolic process"/>
    <property type="evidence" value="ECO:0007669"/>
    <property type="project" value="TreeGrafter"/>
</dbReference>
<dbReference type="FunFam" id="3.40.710.10:FF:000014">
    <property type="entry name" value="Glutaminase"/>
    <property type="match status" value="1"/>
</dbReference>
<dbReference type="Gene3D" id="3.40.710.10">
    <property type="entry name" value="DD-peptidase/beta-lactamase superfamily"/>
    <property type="match status" value="1"/>
</dbReference>
<dbReference type="HAMAP" id="MF_00313">
    <property type="entry name" value="Glutaminase"/>
    <property type="match status" value="1"/>
</dbReference>
<dbReference type="InterPro" id="IPR012338">
    <property type="entry name" value="Beta-lactam/transpept-like"/>
</dbReference>
<dbReference type="InterPro" id="IPR015868">
    <property type="entry name" value="Glutaminase"/>
</dbReference>
<dbReference type="NCBIfam" id="TIGR03814">
    <property type="entry name" value="Gln_ase"/>
    <property type="match status" value="1"/>
</dbReference>
<dbReference type="NCBIfam" id="NF009020">
    <property type="entry name" value="PRK12356.1"/>
    <property type="match status" value="1"/>
</dbReference>
<dbReference type="PANTHER" id="PTHR12544">
    <property type="entry name" value="GLUTAMINASE"/>
    <property type="match status" value="1"/>
</dbReference>
<dbReference type="PANTHER" id="PTHR12544:SF48">
    <property type="entry name" value="GLUTAMINASE 1"/>
    <property type="match status" value="1"/>
</dbReference>
<dbReference type="Pfam" id="PF04960">
    <property type="entry name" value="Glutaminase"/>
    <property type="match status" value="1"/>
</dbReference>
<dbReference type="SUPFAM" id="SSF56601">
    <property type="entry name" value="beta-lactamase/transpeptidase-like"/>
    <property type="match status" value="1"/>
</dbReference>
<keyword id="KW-0007">Acetylation</keyword>
<keyword id="KW-0378">Hydrolase</keyword>
<keyword id="KW-1185">Reference proteome</keyword>
<sequence>MLDANKLQQAVDQAYTQFHSLNGGQNADYIPFLANVPGQLAAVAIVTSDGNVYSAGDSDYRFALESISKVCTLALALEDVGPQAVQDKVGADPTGLPFNSVIALELHGGKPLSPLVNAGAIATTSLINAENTEQRWQRILHIQQQLAGEQVALSDEVNQSEQTTNFHNRAIAWLLYSAGYLYCDAMEACDVYTRQCSTLINTIELATLGATLAAGGVNPLTHKRVLQADNVPYILAEMMMEGLYGRSGDWAYRVGLPGKSGVGGGILAVVPGVMGIAAFSPPLDEEGNSVRGQKMVASVAKQLGYNVFKG</sequence>
<proteinExistence type="inferred from homology"/>
<reference key="1">
    <citation type="journal article" date="2002" name="Proc. Natl. Acad. Sci. U.S.A.">
        <title>Extensive mosaic structure revealed by the complete genome sequence of uropathogenic Escherichia coli.</title>
        <authorList>
            <person name="Welch R.A."/>
            <person name="Burland V."/>
            <person name="Plunkett G. III"/>
            <person name="Redford P."/>
            <person name="Roesch P."/>
            <person name="Rasko D."/>
            <person name="Buckles E.L."/>
            <person name="Liou S.-R."/>
            <person name="Boutin A."/>
            <person name="Hackett J."/>
            <person name="Stroud D."/>
            <person name="Mayhew G.F."/>
            <person name="Rose D.J."/>
            <person name="Zhou S."/>
            <person name="Schwartz D.C."/>
            <person name="Perna N.T."/>
            <person name="Mobley H.L.T."/>
            <person name="Donnenberg M.S."/>
            <person name="Blattner F.R."/>
        </authorList>
    </citation>
    <scope>NUCLEOTIDE SEQUENCE [LARGE SCALE GENOMIC DNA]</scope>
    <source>
        <strain>CFT073 / ATCC 700928 / UPEC</strain>
    </source>
</reference>
<accession>Q8FK76</accession>
<comment type="catalytic activity">
    <reaction evidence="1">
        <text>L-glutamine + H2O = L-glutamate + NH4(+)</text>
        <dbReference type="Rhea" id="RHEA:15889"/>
        <dbReference type="ChEBI" id="CHEBI:15377"/>
        <dbReference type="ChEBI" id="CHEBI:28938"/>
        <dbReference type="ChEBI" id="CHEBI:29985"/>
        <dbReference type="ChEBI" id="CHEBI:58359"/>
        <dbReference type="EC" id="3.5.1.2"/>
    </reaction>
</comment>
<comment type="subunit">
    <text evidence="1">Homotetramer.</text>
</comment>
<comment type="similarity">
    <text evidence="1">Belongs to the glutaminase family.</text>
</comment>
<name>GLSA1_ECOL6</name>
<protein>
    <recommendedName>
        <fullName evidence="1">Glutaminase 1</fullName>
        <ecNumber evidence="1">3.5.1.2</ecNumber>
    </recommendedName>
</protein>
<gene>
    <name evidence="1" type="primary">glsA1</name>
    <name type="ordered locus">c0605</name>
</gene>